<accession>P9WNS7</accession>
<accession>L0T506</accession>
<accession>O53835</accession>
<protein>
    <recommendedName>
        <fullName>Probable tRNA-dihydrouridine synthase</fullName>
        <ecNumber>1.3.1.-</ecNumber>
    </recommendedName>
</protein>
<dbReference type="EC" id="1.3.1.-"/>
<dbReference type="EMBL" id="AL123456">
    <property type="protein sequence ID" value="CCP43571.1"/>
    <property type="molecule type" value="Genomic_DNA"/>
</dbReference>
<dbReference type="PIR" id="G70810">
    <property type="entry name" value="G70810"/>
</dbReference>
<dbReference type="RefSeq" id="NP_215338.1">
    <property type="nucleotide sequence ID" value="NC_000962.3"/>
</dbReference>
<dbReference type="SMR" id="P9WNS7"/>
<dbReference type="FunCoup" id="P9WNS7">
    <property type="interactions" value="446"/>
</dbReference>
<dbReference type="STRING" id="83332.Rv0823c"/>
<dbReference type="PaxDb" id="83332-Rv0823c"/>
<dbReference type="DNASU" id="885380"/>
<dbReference type="GeneID" id="885380"/>
<dbReference type="KEGG" id="mtu:Rv0823c"/>
<dbReference type="KEGG" id="mtv:RVBD_0823c"/>
<dbReference type="PATRIC" id="fig|83332.111.peg.910"/>
<dbReference type="TubercuList" id="Rv0823c"/>
<dbReference type="eggNOG" id="COG0042">
    <property type="taxonomic scope" value="Bacteria"/>
</dbReference>
<dbReference type="InParanoid" id="P9WNS7"/>
<dbReference type="OrthoDB" id="9764501at2"/>
<dbReference type="PhylomeDB" id="P9WNS7"/>
<dbReference type="Proteomes" id="UP000001584">
    <property type="component" value="Chromosome"/>
</dbReference>
<dbReference type="GO" id="GO:0050660">
    <property type="term" value="F:flavin adenine dinucleotide binding"/>
    <property type="evidence" value="ECO:0007669"/>
    <property type="project" value="InterPro"/>
</dbReference>
<dbReference type="GO" id="GO:0000049">
    <property type="term" value="F:tRNA binding"/>
    <property type="evidence" value="ECO:0007669"/>
    <property type="project" value="UniProtKB-KW"/>
</dbReference>
<dbReference type="GO" id="GO:0017150">
    <property type="term" value="F:tRNA dihydrouridine synthase activity"/>
    <property type="evidence" value="ECO:0000318"/>
    <property type="project" value="GO_Central"/>
</dbReference>
<dbReference type="CDD" id="cd02801">
    <property type="entry name" value="DUS_like_FMN"/>
    <property type="match status" value="1"/>
</dbReference>
<dbReference type="FunFam" id="1.10.1200.80:FF:000003">
    <property type="entry name" value="tRNA-dihydrouridine synthase"/>
    <property type="match status" value="1"/>
</dbReference>
<dbReference type="FunFam" id="3.20.20.70:FF:000099">
    <property type="entry name" value="tRNA-dihydrouridine synthase"/>
    <property type="match status" value="1"/>
</dbReference>
<dbReference type="Gene3D" id="3.20.20.70">
    <property type="entry name" value="Aldolase class I"/>
    <property type="match status" value="1"/>
</dbReference>
<dbReference type="Gene3D" id="1.10.1200.80">
    <property type="entry name" value="Putative flavin oxidoreducatase, domain 2"/>
    <property type="match status" value="1"/>
</dbReference>
<dbReference type="InterPro" id="IPR013785">
    <property type="entry name" value="Aldolase_TIM"/>
</dbReference>
<dbReference type="InterPro" id="IPR035587">
    <property type="entry name" value="DUS-like_FMN-bd"/>
</dbReference>
<dbReference type="InterPro" id="IPR001269">
    <property type="entry name" value="DUS_fam"/>
</dbReference>
<dbReference type="InterPro" id="IPR004652">
    <property type="entry name" value="DusB-like"/>
</dbReference>
<dbReference type="InterPro" id="IPR024036">
    <property type="entry name" value="tRNA-dHydroUridine_Synthase_C"/>
</dbReference>
<dbReference type="InterPro" id="IPR018517">
    <property type="entry name" value="tRNA_hU_synthase_CS"/>
</dbReference>
<dbReference type="NCBIfam" id="TIGR00737">
    <property type="entry name" value="nifR3_yhdG"/>
    <property type="match status" value="1"/>
</dbReference>
<dbReference type="PANTHER" id="PTHR45846">
    <property type="entry name" value="TRNA-DIHYDROURIDINE(47) SYNTHASE [NAD(P)(+)]-LIKE"/>
    <property type="match status" value="1"/>
</dbReference>
<dbReference type="PANTHER" id="PTHR45846:SF1">
    <property type="entry name" value="TRNA-DIHYDROURIDINE(47) SYNTHASE [NAD(P)(+)]-LIKE"/>
    <property type="match status" value="1"/>
</dbReference>
<dbReference type="Pfam" id="PF01207">
    <property type="entry name" value="Dus"/>
    <property type="match status" value="1"/>
</dbReference>
<dbReference type="PIRSF" id="PIRSF006621">
    <property type="entry name" value="Dus"/>
    <property type="match status" value="1"/>
</dbReference>
<dbReference type="SUPFAM" id="SSF51395">
    <property type="entry name" value="FMN-linked oxidoreductases"/>
    <property type="match status" value="1"/>
</dbReference>
<dbReference type="PROSITE" id="PS01136">
    <property type="entry name" value="UPF0034"/>
    <property type="match status" value="1"/>
</dbReference>
<evidence type="ECO:0000250" key="1">
    <source>
        <dbReference type="UniProtKB" id="P33371"/>
    </source>
</evidence>
<evidence type="ECO:0000250" key="2">
    <source>
        <dbReference type="UniProtKB" id="Q5SMC7"/>
    </source>
</evidence>
<evidence type="ECO:0000269" key="3">
    <source>
    </source>
</evidence>
<evidence type="ECO:0000305" key="4"/>
<sequence length="389" mass="41388">MSRRRAIQPSPALRIGPIELASPVVLAPMAGVTNVAFRALCRQLEQSKVGTVSGLYVCEMVTARALIERHPVTMHMTTFSADESPRSLQLYTVDPDTTYAAARMIAGEGLADHIDMNFGCPVPKVTKRGGGAALPFKRRLFGQIVAAAVRATEGTDIPVTVKFRIGIDDAHHTHLDAGRIAEAEGAAAVALHARTAAQRYSGTADWEQIARLKQHVRTIPVLGNGDIYDAGDALAMMSTTGCDGVVIGRGCLGRPWLFAELSAAFTGSPAPTPPTLGEVADIIRRHGTLLAAHFGEDKGMRDIRKHIAWYLHGFPAGSALRRALAMVKTFDELDCLLDRLDGTVPFPDSATGARGRQGSPARVALPDGWLTDPDDCRVPEGADAMGSGG</sequence>
<keyword id="KW-0285">Flavoprotein</keyword>
<keyword id="KW-0288">FMN</keyword>
<keyword id="KW-0521">NADP</keyword>
<keyword id="KW-0560">Oxidoreductase</keyword>
<keyword id="KW-1185">Reference proteome</keyword>
<keyword id="KW-0694">RNA-binding</keyword>
<keyword id="KW-0819">tRNA processing</keyword>
<keyword id="KW-0820">tRNA-binding</keyword>
<organism>
    <name type="scientific">Mycobacterium tuberculosis (strain ATCC 25618 / H37Rv)</name>
    <dbReference type="NCBI Taxonomy" id="83332"/>
    <lineage>
        <taxon>Bacteria</taxon>
        <taxon>Bacillati</taxon>
        <taxon>Actinomycetota</taxon>
        <taxon>Actinomycetes</taxon>
        <taxon>Mycobacteriales</taxon>
        <taxon>Mycobacteriaceae</taxon>
        <taxon>Mycobacterium</taxon>
        <taxon>Mycobacterium tuberculosis complex</taxon>
    </lineage>
</organism>
<gene>
    <name type="primary">dus</name>
    <name type="ordered locus">Rv0823c</name>
    <name type="ORF">MTV043.15c</name>
</gene>
<reference key="1">
    <citation type="journal article" date="1998" name="Nature">
        <title>Deciphering the biology of Mycobacterium tuberculosis from the complete genome sequence.</title>
        <authorList>
            <person name="Cole S.T."/>
            <person name="Brosch R."/>
            <person name="Parkhill J."/>
            <person name="Garnier T."/>
            <person name="Churcher C.M."/>
            <person name="Harris D.E."/>
            <person name="Gordon S.V."/>
            <person name="Eiglmeier K."/>
            <person name="Gas S."/>
            <person name="Barry C.E. III"/>
            <person name="Tekaia F."/>
            <person name="Badcock K."/>
            <person name="Basham D."/>
            <person name="Brown D."/>
            <person name="Chillingworth T."/>
            <person name="Connor R."/>
            <person name="Davies R.M."/>
            <person name="Devlin K."/>
            <person name="Feltwell T."/>
            <person name="Gentles S."/>
            <person name="Hamlin N."/>
            <person name="Holroyd S."/>
            <person name="Hornsby T."/>
            <person name="Jagels K."/>
            <person name="Krogh A."/>
            <person name="McLean J."/>
            <person name="Moule S."/>
            <person name="Murphy L.D."/>
            <person name="Oliver S."/>
            <person name="Osborne J."/>
            <person name="Quail M.A."/>
            <person name="Rajandream M.A."/>
            <person name="Rogers J."/>
            <person name="Rutter S."/>
            <person name="Seeger K."/>
            <person name="Skelton S."/>
            <person name="Squares S."/>
            <person name="Squares R."/>
            <person name="Sulston J.E."/>
            <person name="Taylor K."/>
            <person name="Whitehead S."/>
            <person name="Barrell B.G."/>
        </authorList>
    </citation>
    <scope>NUCLEOTIDE SEQUENCE [LARGE SCALE GENOMIC DNA]</scope>
    <source>
        <strain>ATCC 25618 / H37Rv</strain>
    </source>
</reference>
<reference key="2">
    <citation type="journal article" date="2011" name="Mol. Cell. Proteomics">
        <title>Proteogenomic analysis of Mycobacterium tuberculosis by high resolution mass spectrometry.</title>
        <authorList>
            <person name="Kelkar D.S."/>
            <person name="Kumar D."/>
            <person name="Kumar P."/>
            <person name="Balakrishnan L."/>
            <person name="Muthusamy B."/>
            <person name="Yadav A.K."/>
            <person name="Shrivastava P."/>
            <person name="Marimuthu A."/>
            <person name="Anand S."/>
            <person name="Sundaram H."/>
            <person name="Kingsbury R."/>
            <person name="Harsha H.C."/>
            <person name="Nair B."/>
            <person name="Prasad T.S."/>
            <person name="Chauhan D.S."/>
            <person name="Katoch K."/>
            <person name="Katoch V.M."/>
            <person name="Kumar P."/>
            <person name="Chaerkady R."/>
            <person name="Ramachandran S."/>
            <person name="Dash D."/>
            <person name="Pandey A."/>
        </authorList>
    </citation>
    <scope>IDENTIFICATION BY MASS SPECTROMETRY [LARGE SCALE ANALYSIS]</scope>
    <source>
        <strain>ATCC 25618 / H37Rv</strain>
    </source>
</reference>
<reference key="3">
    <citation type="journal article" date="2020" name="Mol. Microbiol.">
        <title>Depletion of the DarG antitoxin in Mycobacterium tuberculosis triggers the DNA-damage response and leads to cell death.</title>
        <authorList>
            <person name="Zaveri A."/>
            <person name="Wang R."/>
            <person name="Botella L."/>
            <person name="Sharma R."/>
            <person name="Zhu L."/>
            <person name="Wallach J.B."/>
            <person name="Song N."/>
            <person name="Jansen R.S."/>
            <person name="Rhee K.Y."/>
            <person name="Ehrt S."/>
            <person name="Schnappinger D."/>
        </authorList>
    </citation>
    <scope>SUBUNIT</scope>
    <source>
        <strain>H37Rv</strain>
    </source>
</reference>
<name>DUS_MYCTU</name>
<proteinExistence type="evidence at protein level"/>
<feature type="chain" id="PRO_0000162137" description="Probable tRNA-dihydrouridine synthase">
    <location>
        <begin position="1"/>
        <end position="389"/>
    </location>
</feature>
<feature type="active site" description="Proton donor" evidence="2">
    <location>
        <position position="120"/>
    </location>
</feature>
<feature type="binding site" evidence="1">
    <location>
        <begin position="28"/>
        <end position="30"/>
    </location>
    <ligand>
        <name>FMN</name>
        <dbReference type="ChEBI" id="CHEBI:58210"/>
    </ligand>
</feature>
<feature type="binding site" evidence="1">
    <location>
        <position position="89"/>
    </location>
    <ligand>
        <name>FMN</name>
        <dbReference type="ChEBI" id="CHEBI:58210"/>
    </ligand>
</feature>
<feature type="binding site" evidence="1">
    <location>
        <position position="162"/>
    </location>
    <ligand>
        <name>FMN</name>
        <dbReference type="ChEBI" id="CHEBI:58210"/>
    </ligand>
</feature>
<feature type="binding site" evidence="1">
    <location>
        <begin position="224"/>
        <end position="226"/>
    </location>
    <ligand>
        <name>FMN</name>
        <dbReference type="ChEBI" id="CHEBI:58210"/>
    </ligand>
</feature>
<feature type="binding site" evidence="1">
    <location>
        <begin position="248"/>
        <end position="249"/>
    </location>
    <ligand>
        <name>FMN</name>
        <dbReference type="ChEBI" id="CHEBI:58210"/>
    </ligand>
</feature>
<comment type="function">
    <text evidence="1">Catalyzes the synthesis of 5,6-dihydrouridine (D), a modified base found in the D-loop of most tRNAs, via the reduction of the C5-C6 double bond in target uridines.</text>
</comment>
<comment type="catalytic activity">
    <reaction evidence="1">
        <text>a 5,6-dihydrouridine in tRNA + NAD(+) = a uridine in tRNA + NADH + H(+)</text>
        <dbReference type="Rhea" id="RHEA:54452"/>
        <dbReference type="Rhea" id="RHEA-COMP:13339"/>
        <dbReference type="Rhea" id="RHEA-COMP:13887"/>
        <dbReference type="ChEBI" id="CHEBI:15378"/>
        <dbReference type="ChEBI" id="CHEBI:57540"/>
        <dbReference type="ChEBI" id="CHEBI:57945"/>
        <dbReference type="ChEBI" id="CHEBI:65315"/>
        <dbReference type="ChEBI" id="CHEBI:74443"/>
    </reaction>
</comment>
<comment type="catalytic activity">
    <reaction evidence="1">
        <text>a 5,6-dihydrouridine in tRNA + NADP(+) = a uridine in tRNA + NADPH + H(+)</text>
        <dbReference type="Rhea" id="RHEA:23624"/>
        <dbReference type="Rhea" id="RHEA-COMP:13339"/>
        <dbReference type="Rhea" id="RHEA-COMP:13887"/>
        <dbReference type="ChEBI" id="CHEBI:15378"/>
        <dbReference type="ChEBI" id="CHEBI:57783"/>
        <dbReference type="ChEBI" id="CHEBI:58349"/>
        <dbReference type="ChEBI" id="CHEBI:65315"/>
        <dbReference type="ChEBI" id="CHEBI:74443"/>
    </reaction>
</comment>
<comment type="cofactor">
    <cofactor evidence="1">
        <name>FMN</name>
        <dbReference type="ChEBI" id="CHEBI:58210"/>
    </cofactor>
</comment>
<comment type="subunit">
    <text evidence="3">Co-immunoprecipitates with DarG in the presence and absence of darT.</text>
</comment>
<comment type="similarity">
    <text evidence="4">Belongs to the Dus family.</text>
</comment>